<evidence type="ECO:0000255" key="1">
    <source>
        <dbReference type="HAMAP-Rule" id="MF_03100"/>
    </source>
</evidence>
<evidence type="ECO:0000256" key="2">
    <source>
        <dbReference type="SAM" id="MobiDB-lite"/>
    </source>
</evidence>
<evidence type="ECO:0000269" key="3">
    <source>
    </source>
</evidence>
<evidence type="ECO:0000269" key="4">
    <source>
    </source>
</evidence>
<evidence type="ECO:0000312" key="5">
    <source>
        <dbReference type="WormBase" id="F56A3.2"/>
    </source>
</evidence>
<proteinExistence type="evidence at protein level"/>
<comment type="function">
    <text evidence="1 3 4">Catalytic subunit of a heterodimeric structure-specific endonuclease that resolves DNA secondary structures generated during DNA repair and recombination. Has endonuclease activity towards branched DNA substrates, introducing single-strand cuts in duplex DNA close to junctions with ss-DNA (Potential). Has a preference for replication forks over 5' flap structures or Holliday junctions and shows much lower activity toward 3' flap structures (PubMed:22927825). Required for proper crossover distribution through inhibition of crossover formation at the central region of chromosomes (PubMed:22927825, PubMed:23874210).</text>
</comment>
<comment type="cofactor">
    <cofactor evidence="1">
        <name>a divalent metal cation</name>
        <dbReference type="ChEBI" id="CHEBI:60240"/>
    </cofactor>
</comment>
<comment type="subunit">
    <text evidence="3 4">Forms a heterodimer with him-18/slx-4.</text>
</comment>
<comment type="subcellular location">
    <subcellularLocation>
        <location evidence="1">Nucleus</location>
    </subcellularLocation>
</comment>
<comment type="domain">
    <text evidence="3">Both the N- and C-terminal regions are required for interaction with him-18.</text>
</comment>
<comment type="disruption phenotype">
    <text evidence="3 4">Reduced brood size, increased embryonic lethality and increased larval arrest (PubMed:22927825, PubMed:23874210). Increased number of rad51 foci in meitotic and mitotic nuclei and increased germ cell apoptosis (PubMed:22927825). Hypersensitivity to ultraviolet C, nitrogen mustard and camptothecin but not to gamma irradiation (PubMed:22927825). Increased chromosomal abnormalities including increased intra- and inter-bivalent chromatin bridges (PubMed:23874210). Increased meiotic crossover frequency in the center of chromosomes III, IV, V and X with decreased frequency in the arm regions of chromosomes III, IV, V and X (PubMed:22927825).</text>
</comment>
<comment type="similarity">
    <text evidence="1">Belongs to the SLX1 family.</text>
</comment>
<keyword id="KW-0227">DNA damage</keyword>
<keyword id="KW-0233">DNA recombination</keyword>
<keyword id="KW-0234">DNA repair</keyword>
<keyword id="KW-0255">Endonuclease</keyword>
<keyword id="KW-0378">Hydrolase</keyword>
<keyword id="KW-0479">Metal-binding</keyword>
<keyword id="KW-0540">Nuclease</keyword>
<keyword id="KW-0539">Nucleus</keyword>
<keyword id="KW-1185">Reference proteome</keyword>
<keyword id="KW-0862">Zinc</keyword>
<keyword id="KW-0863">Zinc-finger</keyword>
<dbReference type="EC" id="3.1.-.-" evidence="1"/>
<dbReference type="EMBL" id="FO080752">
    <property type="protein sequence ID" value="CCD66429.1"/>
    <property type="molecule type" value="Genomic_DNA"/>
</dbReference>
<dbReference type="PIR" id="T29147">
    <property type="entry name" value="T29147"/>
</dbReference>
<dbReference type="RefSeq" id="NP_491541.1">
    <property type="nucleotide sequence ID" value="NM_059140.7"/>
</dbReference>
<dbReference type="SMR" id="P91351"/>
<dbReference type="BioGRID" id="37617">
    <property type="interactions" value="1"/>
</dbReference>
<dbReference type="FunCoup" id="P91351">
    <property type="interactions" value="1243"/>
</dbReference>
<dbReference type="STRING" id="6239.F56A3.2.1"/>
<dbReference type="PaxDb" id="6239-F56A3.2"/>
<dbReference type="EnsemblMetazoa" id="F56A3.2.1">
    <property type="protein sequence ID" value="F56A3.2.1"/>
    <property type="gene ID" value="WBGene00018909"/>
</dbReference>
<dbReference type="GeneID" id="172157"/>
<dbReference type="KEGG" id="cel:CELE_F56A3.2"/>
<dbReference type="UCSC" id="F56A3.2">
    <property type="organism name" value="c. elegans"/>
</dbReference>
<dbReference type="AGR" id="WB:WBGene00018909"/>
<dbReference type="CTD" id="172157"/>
<dbReference type="WormBase" id="F56A3.2">
    <property type="protein sequence ID" value="CE11216"/>
    <property type="gene ID" value="WBGene00018909"/>
    <property type="gene designation" value="slx-1"/>
</dbReference>
<dbReference type="eggNOG" id="KOG3005">
    <property type="taxonomic scope" value="Eukaryota"/>
</dbReference>
<dbReference type="GeneTree" id="ENSGT00390000013368"/>
<dbReference type="HOGENOM" id="CLU_052232_0_0_1"/>
<dbReference type="InParanoid" id="P91351"/>
<dbReference type="OMA" id="SHFHSKC"/>
<dbReference type="OrthoDB" id="24645at2759"/>
<dbReference type="PhylomeDB" id="P91351"/>
<dbReference type="PRO" id="PR:P91351"/>
<dbReference type="Proteomes" id="UP000001940">
    <property type="component" value="Chromosome I"/>
</dbReference>
<dbReference type="Bgee" id="WBGene00018909">
    <property type="expression patterns" value="Expressed in germ line (C elegans) and 4 other cell types or tissues"/>
</dbReference>
<dbReference type="GO" id="GO:0033557">
    <property type="term" value="C:Slx1-Slx4 complex"/>
    <property type="evidence" value="ECO:0000314"/>
    <property type="project" value="UniProtKB"/>
</dbReference>
<dbReference type="GO" id="GO:0017108">
    <property type="term" value="F:5'-flap endonuclease activity"/>
    <property type="evidence" value="ECO:0007669"/>
    <property type="project" value="InterPro"/>
</dbReference>
<dbReference type="GO" id="GO:0019899">
    <property type="term" value="F:enzyme binding"/>
    <property type="evidence" value="ECO:0000353"/>
    <property type="project" value="UniProtKB"/>
</dbReference>
<dbReference type="GO" id="GO:0008270">
    <property type="term" value="F:zinc ion binding"/>
    <property type="evidence" value="ECO:0007669"/>
    <property type="project" value="UniProtKB-KW"/>
</dbReference>
<dbReference type="GO" id="GO:0000724">
    <property type="term" value="P:double-strand break repair via homologous recombination"/>
    <property type="evidence" value="ECO:0000316"/>
    <property type="project" value="UniProtKB"/>
</dbReference>
<dbReference type="GO" id="GO:0009792">
    <property type="term" value="P:embryo development ending in birth or egg hatching"/>
    <property type="evidence" value="ECO:0000316"/>
    <property type="project" value="UniProtKB"/>
</dbReference>
<dbReference type="GO" id="GO:0036297">
    <property type="term" value="P:interstrand cross-link repair"/>
    <property type="evidence" value="ECO:0000315"/>
    <property type="project" value="UniProtKB"/>
</dbReference>
<dbReference type="GO" id="GO:0002164">
    <property type="term" value="P:larval development"/>
    <property type="evidence" value="ECO:0000315"/>
    <property type="project" value="UniProtKB"/>
</dbReference>
<dbReference type="GO" id="GO:0051307">
    <property type="term" value="P:meiotic chromosome separation"/>
    <property type="evidence" value="ECO:0000315"/>
    <property type="project" value="UniProtKB"/>
</dbReference>
<dbReference type="GO" id="GO:0000706">
    <property type="term" value="P:meiotic DNA double-strand break processing"/>
    <property type="evidence" value="ECO:0000315"/>
    <property type="project" value="UniProtKB"/>
</dbReference>
<dbReference type="GO" id="GO:0061064">
    <property type="term" value="P:negative regulation of nematode larval development"/>
    <property type="evidence" value="ECO:0000315"/>
    <property type="project" value="UniProtKB"/>
</dbReference>
<dbReference type="GO" id="GO:0040019">
    <property type="term" value="P:positive regulation of embryonic development"/>
    <property type="evidence" value="ECO:0000315"/>
    <property type="project" value="UniProtKB"/>
</dbReference>
<dbReference type="GO" id="GO:0000712">
    <property type="term" value="P:resolution of meiotic recombination intermediates"/>
    <property type="evidence" value="ECO:0000316"/>
    <property type="project" value="WormBase"/>
</dbReference>
<dbReference type="CDD" id="cd10455">
    <property type="entry name" value="GIY-YIG_SLX1"/>
    <property type="match status" value="1"/>
</dbReference>
<dbReference type="FunFam" id="3.30.40.10:FF:001251">
    <property type="entry name" value="Structure-specific endonuclease subunit SLX1 homolog"/>
    <property type="match status" value="1"/>
</dbReference>
<dbReference type="FunFam" id="3.40.1440.10:FF:000008">
    <property type="entry name" value="Structure-specific endonuclease subunit SLX1 homolog"/>
    <property type="match status" value="1"/>
</dbReference>
<dbReference type="Gene3D" id="3.40.1440.10">
    <property type="entry name" value="GIY-YIG endonuclease"/>
    <property type="match status" value="1"/>
</dbReference>
<dbReference type="Gene3D" id="3.30.40.10">
    <property type="entry name" value="Zinc/RING finger domain, C3HC4 (zinc finger)"/>
    <property type="match status" value="1"/>
</dbReference>
<dbReference type="HAMAP" id="MF_03100">
    <property type="entry name" value="Endonuc_su_Slx1"/>
    <property type="match status" value="1"/>
</dbReference>
<dbReference type="InterPro" id="IPR000305">
    <property type="entry name" value="GIY-YIG_endonuc"/>
</dbReference>
<dbReference type="InterPro" id="IPR035901">
    <property type="entry name" value="GIY-YIG_endonuc_sf"/>
</dbReference>
<dbReference type="InterPro" id="IPR027520">
    <property type="entry name" value="Slx1"/>
</dbReference>
<dbReference type="InterPro" id="IPR048749">
    <property type="entry name" value="SLX1_C"/>
</dbReference>
<dbReference type="InterPro" id="IPR050381">
    <property type="entry name" value="SLX1_endonuclease"/>
</dbReference>
<dbReference type="InterPro" id="IPR001965">
    <property type="entry name" value="Znf_PHD"/>
</dbReference>
<dbReference type="InterPro" id="IPR013083">
    <property type="entry name" value="Znf_RING/FYVE/PHD"/>
</dbReference>
<dbReference type="PANTHER" id="PTHR20208">
    <property type="entry name" value="STRUCTURE-SPECIFIC ENDONUCLEASE SUBUNIT SLX1"/>
    <property type="match status" value="1"/>
</dbReference>
<dbReference type="PANTHER" id="PTHR20208:SF10">
    <property type="entry name" value="STRUCTURE-SPECIFIC ENDONUCLEASE SUBUNIT SLX1"/>
    <property type="match status" value="1"/>
</dbReference>
<dbReference type="Pfam" id="PF01541">
    <property type="entry name" value="GIY-YIG"/>
    <property type="match status" value="1"/>
</dbReference>
<dbReference type="Pfam" id="PF21202">
    <property type="entry name" value="SLX1_C"/>
    <property type="match status" value="1"/>
</dbReference>
<dbReference type="SMART" id="SM00465">
    <property type="entry name" value="GIYc"/>
    <property type="match status" value="1"/>
</dbReference>
<dbReference type="SMART" id="SM00249">
    <property type="entry name" value="PHD"/>
    <property type="match status" value="1"/>
</dbReference>
<dbReference type="PROSITE" id="PS50164">
    <property type="entry name" value="GIY_YIG"/>
    <property type="match status" value="1"/>
</dbReference>
<reference key="1">
    <citation type="journal article" date="1998" name="Science">
        <title>Genome sequence of the nematode C. elegans: a platform for investigating biology.</title>
        <authorList>
            <consortium name="The C. elegans sequencing consortium"/>
        </authorList>
    </citation>
    <scope>NUCLEOTIDE SEQUENCE [LARGE SCALE GENOMIC DNA]</scope>
    <source>
        <strain>Bristol N2</strain>
    </source>
</reference>
<reference key="2">
    <citation type="journal article" date="2012" name="PLoS Genet.">
        <title>SLX-1 is required for maintaining genomic integrity and promoting meiotic noncrossovers in the Caenorhabditis elegans germline.</title>
        <authorList>
            <person name="Saito T.T."/>
            <person name="Mohideen F."/>
            <person name="Meyer K."/>
            <person name="Harper J.W."/>
            <person name="Colaiacovo M.P."/>
        </authorList>
    </citation>
    <scope>FUNCTION</scope>
    <scope>INTERACTION WITH HIM-18</scope>
    <scope>DISRUPTION PHENOTYPE</scope>
</reference>
<reference key="3">
    <citation type="journal article" date="2013" name="PLoS Genet.">
        <title>Interplay between structure-specific endonucleases for crossover control during Caenorhabditis elegans meiosis.</title>
        <authorList>
            <person name="Saito T.T."/>
            <person name="Lui D.Y."/>
            <person name="Kim H.M."/>
            <person name="Meyer K."/>
            <person name="Colaiacovo M.P."/>
        </authorList>
    </citation>
    <scope>FUNCTION</scope>
    <scope>INTERACTION WITH HIM-18</scope>
    <scope>DISRUPTION PHENOTYPE</scope>
</reference>
<sequence length="443" mass="50536">METFILSSDSDDDSGPPPSKRRTIEGIPRSFSGDKKIRFSFGASNMSQDTTQEIIPEDTDTVPLTIPSTPALSGKFDSKTPKSVRRRSVSMSCFTPIVETINQPPTNQACSSFLQKEYNFHDLSSDEEGGDGGAGCSKDEDKIIEDNLNLRALLSPEKKKRKEKIEEVQNEFYGVYCLISRSDRPCYKNRCYIGYTVDPNRRIMQHNGGRDKGGAKKTDSRGPWDMVCVVHGFPNHVAALHFEWAWQNPLVSKSLKEKQLRKERKETPFAFQLRIACELMNSSAFCRFALTFRWLITTEELPFPTSCVPPDHTKLRFGKVKKEMSLVPSKREDYLEMGECRICGKDIEKLWSLVRCISATCPSHFHSKCLSENGLKLKNEHVDHVYPLKANCPTCGQFYLWGDIIREQRRIIKISTKCAEEFQNMVVRKELPHREISPISSKK</sequence>
<accession>P91351</accession>
<name>SLX1_CAEEL</name>
<organism>
    <name type="scientific">Caenorhabditis elegans</name>
    <dbReference type="NCBI Taxonomy" id="6239"/>
    <lineage>
        <taxon>Eukaryota</taxon>
        <taxon>Metazoa</taxon>
        <taxon>Ecdysozoa</taxon>
        <taxon>Nematoda</taxon>
        <taxon>Chromadorea</taxon>
        <taxon>Rhabditida</taxon>
        <taxon>Rhabditina</taxon>
        <taxon>Rhabditomorpha</taxon>
        <taxon>Rhabditoidea</taxon>
        <taxon>Rhabditidae</taxon>
        <taxon>Peloderinae</taxon>
        <taxon>Caenorhabditis</taxon>
    </lineage>
</organism>
<gene>
    <name evidence="5" type="primary">slx-1</name>
    <name evidence="1" type="synonym">giyd-1</name>
    <name evidence="5" type="ORF">F56A3.2</name>
</gene>
<feature type="chain" id="PRO_0000383751" description="Structure-specific endonuclease subunit SLX1 homolog">
    <location>
        <begin position="1"/>
        <end position="443"/>
    </location>
</feature>
<feature type="domain" description="GIY-YIG" evidence="1">
    <location>
        <begin position="171"/>
        <end position="258"/>
    </location>
</feature>
<feature type="zinc finger region" description="SLX1-type" evidence="1">
    <location>
        <begin position="340"/>
        <end position="395"/>
    </location>
</feature>
<feature type="region of interest" description="Disordered" evidence="2">
    <location>
        <begin position="1"/>
        <end position="27"/>
    </location>
</feature>
<protein>
    <recommendedName>
        <fullName evidence="1">Structure-specific endonuclease subunit SLX1 homolog</fullName>
        <ecNumber evidence="1">3.1.-.-</ecNumber>
    </recommendedName>
    <alternativeName>
        <fullName evidence="1">GIY-YIG domain-containing protein 1</fullName>
    </alternativeName>
</protein>